<comment type="function">
    <text evidence="1">Catalyzes the conversion of heme O to heme A by two successive hydroxylations of the methyl group at C8. The first hydroxylation forms heme I, the second hydroxylation results in an unstable dihydroxymethyl group, which spontaneously dehydrates, resulting in the formyl group of heme A.</text>
</comment>
<comment type="catalytic activity">
    <reaction evidence="1">
        <text>Fe(II)-heme o + 2 A + H2O = Fe(II)-heme a + 2 AH2</text>
        <dbReference type="Rhea" id="RHEA:63388"/>
        <dbReference type="ChEBI" id="CHEBI:13193"/>
        <dbReference type="ChEBI" id="CHEBI:15377"/>
        <dbReference type="ChEBI" id="CHEBI:17499"/>
        <dbReference type="ChEBI" id="CHEBI:60530"/>
        <dbReference type="ChEBI" id="CHEBI:61715"/>
        <dbReference type="EC" id="1.17.99.9"/>
    </reaction>
    <physiologicalReaction direction="left-to-right" evidence="1">
        <dbReference type="Rhea" id="RHEA:63389"/>
    </physiologicalReaction>
</comment>
<comment type="cofactor">
    <cofactor evidence="1">
        <name>heme b</name>
        <dbReference type="ChEBI" id="CHEBI:60344"/>
    </cofactor>
</comment>
<comment type="pathway">
    <text evidence="1">Porphyrin-containing compound metabolism; heme A biosynthesis; heme A from heme O: step 1/1.</text>
</comment>
<comment type="subunit">
    <text evidence="1">Interacts with CtaB.</text>
</comment>
<comment type="subcellular location">
    <subcellularLocation>
        <location evidence="1">Cell membrane</location>
        <topology evidence="1">Multi-pass membrane protein</topology>
    </subcellularLocation>
</comment>
<comment type="similarity">
    <text evidence="1">Belongs to the COX15/CtaA family. Type 2 subfamily.</text>
</comment>
<evidence type="ECO:0000255" key="1">
    <source>
        <dbReference type="HAMAP-Rule" id="MF_01665"/>
    </source>
</evidence>
<protein>
    <recommendedName>
        <fullName evidence="1">Heme A synthase</fullName>
        <shortName evidence="1">HAS</shortName>
        <ecNumber evidence="1">1.17.99.9</ecNumber>
    </recommendedName>
    <alternativeName>
        <fullName evidence="1">Cytochrome aa3-controlling protein</fullName>
    </alternativeName>
</protein>
<keyword id="KW-1003">Cell membrane</keyword>
<keyword id="KW-0350">Heme biosynthesis</keyword>
<keyword id="KW-0408">Iron</keyword>
<keyword id="KW-0472">Membrane</keyword>
<keyword id="KW-0479">Metal-binding</keyword>
<keyword id="KW-0560">Oxidoreductase</keyword>
<keyword id="KW-0812">Transmembrane</keyword>
<keyword id="KW-1133">Transmembrane helix</keyword>
<dbReference type="EC" id="1.17.99.9" evidence="1"/>
<dbReference type="EMBL" id="CP000463">
    <property type="protein sequence ID" value="ABJ06786.1"/>
    <property type="molecule type" value="Genomic_DNA"/>
</dbReference>
<dbReference type="SMR" id="Q07MP8"/>
<dbReference type="STRING" id="316055.RPE_2849"/>
<dbReference type="KEGG" id="rpe:RPE_2849"/>
<dbReference type="eggNOG" id="COG1612">
    <property type="taxonomic scope" value="Bacteria"/>
</dbReference>
<dbReference type="HOGENOM" id="CLU_017627_0_0_5"/>
<dbReference type="OrthoDB" id="9793156at2"/>
<dbReference type="UniPathway" id="UPA00269">
    <property type="reaction ID" value="UER00713"/>
</dbReference>
<dbReference type="GO" id="GO:0005886">
    <property type="term" value="C:plasma membrane"/>
    <property type="evidence" value="ECO:0007669"/>
    <property type="project" value="UniProtKB-SubCell"/>
</dbReference>
<dbReference type="GO" id="GO:0046872">
    <property type="term" value="F:metal ion binding"/>
    <property type="evidence" value="ECO:0007669"/>
    <property type="project" value="UniProtKB-KW"/>
</dbReference>
<dbReference type="GO" id="GO:0016653">
    <property type="term" value="F:oxidoreductase activity, acting on NAD(P)H, heme protein as acceptor"/>
    <property type="evidence" value="ECO:0007669"/>
    <property type="project" value="InterPro"/>
</dbReference>
<dbReference type="GO" id="GO:0006784">
    <property type="term" value="P:heme A biosynthetic process"/>
    <property type="evidence" value="ECO:0007669"/>
    <property type="project" value="UniProtKB-UniRule"/>
</dbReference>
<dbReference type="HAMAP" id="MF_01665">
    <property type="entry name" value="HemeA_synth_type2"/>
    <property type="match status" value="1"/>
</dbReference>
<dbReference type="InterPro" id="IPR003780">
    <property type="entry name" value="COX15/CtaA_fam"/>
</dbReference>
<dbReference type="InterPro" id="IPR023754">
    <property type="entry name" value="HemeA_Synthase_type2"/>
</dbReference>
<dbReference type="PANTHER" id="PTHR23289">
    <property type="entry name" value="CYTOCHROME C OXIDASE ASSEMBLY PROTEIN COX15"/>
    <property type="match status" value="1"/>
</dbReference>
<dbReference type="PANTHER" id="PTHR23289:SF2">
    <property type="entry name" value="CYTOCHROME C OXIDASE ASSEMBLY PROTEIN COX15 HOMOLOG"/>
    <property type="match status" value="1"/>
</dbReference>
<dbReference type="Pfam" id="PF02628">
    <property type="entry name" value="COX15-CtaA"/>
    <property type="match status" value="1"/>
</dbReference>
<organism>
    <name type="scientific">Rhodopseudomonas palustris (strain BisA53)</name>
    <dbReference type="NCBI Taxonomy" id="316055"/>
    <lineage>
        <taxon>Bacteria</taxon>
        <taxon>Pseudomonadati</taxon>
        <taxon>Pseudomonadota</taxon>
        <taxon>Alphaproteobacteria</taxon>
        <taxon>Hyphomicrobiales</taxon>
        <taxon>Nitrobacteraceae</taxon>
        <taxon>Rhodopseudomonas</taxon>
    </lineage>
</organism>
<gene>
    <name evidence="1" type="primary">ctaA</name>
    <name type="ordered locus">RPE_2849</name>
</gene>
<proteinExistence type="inferred from homology"/>
<reference key="1">
    <citation type="submission" date="2006-09" db="EMBL/GenBank/DDBJ databases">
        <title>Complete sequence of Rhodopseudomonas palustris BisA53.</title>
        <authorList>
            <consortium name="US DOE Joint Genome Institute"/>
            <person name="Copeland A."/>
            <person name="Lucas S."/>
            <person name="Lapidus A."/>
            <person name="Barry K."/>
            <person name="Detter J.C."/>
            <person name="Glavina del Rio T."/>
            <person name="Hammon N."/>
            <person name="Israni S."/>
            <person name="Dalin E."/>
            <person name="Tice H."/>
            <person name="Pitluck S."/>
            <person name="Chain P."/>
            <person name="Malfatti S."/>
            <person name="Shin M."/>
            <person name="Vergez L."/>
            <person name="Schmutz J."/>
            <person name="Larimer F."/>
            <person name="Land M."/>
            <person name="Hauser L."/>
            <person name="Pelletier D.A."/>
            <person name="Kyrpides N."/>
            <person name="Kim E."/>
            <person name="Harwood C.S."/>
            <person name="Oda Y."/>
            <person name="Richardson P."/>
        </authorList>
    </citation>
    <scope>NUCLEOTIDE SEQUENCE [LARGE SCALE GENOMIC DNA]</scope>
    <source>
        <strain>BisA53</strain>
    </source>
</reference>
<feature type="chain" id="PRO_0000349067" description="Heme A synthase">
    <location>
        <begin position="1"/>
        <end position="362"/>
    </location>
</feature>
<feature type="transmembrane region" description="Helical" evidence="1">
    <location>
        <begin position="12"/>
        <end position="32"/>
    </location>
</feature>
<feature type="transmembrane region" description="Helical" evidence="1">
    <location>
        <begin position="102"/>
        <end position="122"/>
    </location>
</feature>
<feature type="transmembrane region" description="Helical" evidence="1">
    <location>
        <begin position="128"/>
        <end position="148"/>
    </location>
</feature>
<feature type="transmembrane region" description="Helical" evidence="1">
    <location>
        <begin position="159"/>
        <end position="179"/>
    </location>
</feature>
<feature type="transmembrane region" description="Helical" evidence="1">
    <location>
        <begin position="198"/>
        <end position="218"/>
    </location>
</feature>
<feature type="transmembrane region" description="Helical" evidence="1">
    <location>
        <begin position="264"/>
        <end position="286"/>
    </location>
</feature>
<feature type="transmembrane region" description="Helical" evidence="1">
    <location>
        <begin position="291"/>
        <end position="311"/>
    </location>
</feature>
<feature type="transmembrane region" description="Helical" evidence="1">
    <location>
        <begin position="314"/>
        <end position="334"/>
    </location>
</feature>
<feature type="binding site" description="axial binding residue" evidence="1">
    <location>
        <position position="262"/>
    </location>
    <ligand>
        <name>heme</name>
        <dbReference type="ChEBI" id="CHEBI:30413"/>
    </ligand>
    <ligandPart>
        <name>Fe</name>
        <dbReference type="ChEBI" id="CHEBI:18248"/>
    </ligandPart>
</feature>
<feature type="binding site" description="axial binding residue" evidence="1">
    <location>
        <position position="322"/>
    </location>
    <ligand>
        <name>heme</name>
        <dbReference type="ChEBI" id="CHEBI:30413"/>
    </ligand>
    <ligandPart>
        <name>Fe</name>
        <dbReference type="ChEBI" id="CHEBI:18248"/>
    </ligandPart>
</feature>
<accession>Q07MP8</accession>
<name>CTAA_RHOP5</name>
<sequence length="362" mass="39801">MPGSAAARPLRAVKIWLGAIAALIAAMVLVGGATRLTESGLSIVEWKPITGTLPPLTDAQWAQAFEGYKTIPQYRELNAGMSLSEFKTIFWWEWSHRLLGRVIGLAYLLPFLWFIWRGHLGGELKRRLWLIFGLGALQGAVGWWMVASGLSQRVEVAQERLAIHLTLALVIFAAIVWTLRRLDERPVGAVPLRLRITAAALLALTFVQIFFGALVAGLRAGKLYNTWPTIDGALIPSAERLWFQEPWWRNLFDNHLTVQFDHRMLAYALWALAIAHAIDAVRARAGAAARGAVWFAAALTLQAALGIFTLLYEVPIGLALAHQAVAVLVLMLGVLQLERLWPRASASAANLPKSAMAAASRN</sequence>